<protein>
    <recommendedName>
        <fullName>CTD small phosphatase-like protein 2-A</fullName>
        <shortName>CTDSP-like 2-A</shortName>
        <ecNumber>3.1.3.-</ecNumber>
    </recommendedName>
</protein>
<proteinExistence type="evidence at transcript level"/>
<keyword id="KW-0378">Hydrolase</keyword>
<keyword id="KW-0904">Protein phosphatase</keyword>
<keyword id="KW-1185">Reference proteome</keyword>
<gene>
    <name type="primary">ctdspl2a</name>
    <name type="ORF">zgc:154017</name>
</gene>
<sequence>MRLRVRKASQQRSATPSARTVKTKRKHSEVEHSLSTEDAKMQKRDTGIFSTIKRFIRGNAVKVEQCTPAKRSRVDCDSDSNLITSTPTGGNLPSRANPKTRRKGPVNGDTMTGQNKPVKPNGKLEVQAETPSSPPRTTLLGTIFSPVFSFFSPANKNATAGSDSPGQAVEAEEIVKQLDMEQLEETPTSTTTDGRDLTFDPALNPRPLPHIDTTVEEGEIVTEADMPPLTAVGSNSNYPDVPPSPPAEGTYEEDWEVFDPYFFIKHVPPLTEEQLTRKPALPLKTRSTPEFSLVLDLDETLVHCSLNELEDAALTFPVLFQDVIYQVYVRLRPFFREFLERMSQIYEIILFTASKKVYADKLLNILDPKKQLVRHRLFREHCVCVQGNYIKDLNILGRDLSKTVIIDNSPQAFAYQLSNGIPIESWFVDKNDNELLKLVPFLEKLVELNEDVRPYIRERFRLHDLLPPD</sequence>
<comment type="function">
    <text evidence="1">Probable phosphatase.</text>
</comment>
<comment type="similarity">
    <text evidence="4">Belongs to the CTDSPL2 family.</text>
</comment>
<name>CTL2A_DANRE</name>
<feature type="chain" id="PRO_0000331468" description="CTD small phosphatase-like protein 2-A">
    <location>
        <begin position="1"/>
        <end position="469"/>
    </location>
</feature>
<feature type="domain" description="FCP1 homology" evidence="2">
    <location>
        <begin position="286"/>
        <end position="445"/>
    </location>
</feature>
<feature type="region of interest" description="Disordered" evidence="3">
    <location>
        <begin position="1"/>
        <end position="42"/>
    </location>
</feature>
<feature type="region of interest" description="Disordered" evidence="3">
    <location>
        <begin position="73"/>
        <end position="136"/>
    </location>
</feature>
<feature type="region of interest" description="Disordered" evidence="3">
    <location>
        <begin position="181"/>
        <end position="209"/>
    </location>
</feature>
<feature type="region of interest" description="Disordered" evidence="3">
    <location>
        <begin position="231"/>
        <end position="250"/>
    </location>
</feature>
<feature type="compositionally biased region" description="Polar residues" evidence="3">
    <location>
        <begin position="10"/>
        <end position="20"/>
    </location>
</feature>
<feature type="compositionally biased region" description="Basic and acidic residues" evidence="3">
    <location>
        <begin position="28"/>
        <end position="42"/>
    </location>
</feature>
<feature type="compositionally biased region" description="Polar residues" evidence="3">
    <location>
        <begin position="79"/>
        <end position="91"/>
    </location>
</feature>
<organism>
    <name type="scientific">Danio rerio</name>
    <name type="common">Zebrafish</name>
    <name type="synonym">Brachydanio rerio</name>
    <dbReference type="NCBI Taxonomy" id="7955"/>
    <lineage>
        <taxon>Eukaryota</taxon>
        <taxon>Metazoa</taxon>
        <taxon>Chordata</taxon>
        <taxon>Craniata</taxon>
        <taxon>Vertebrata</taxon>
        <taxon>Euteleostomi</taxon>
        <taxon>Actinopterygii</taxon>
        <taxon>Neopterygii</taxon>
        <taxon>Teleostei</taxon>
        <taxon>Ostariophysi</taxon>
        <taxon>Cypriniformes</taxon>
        <taxon>Danionidae</taxon>
        <taxon>Danioninae</taxon>
        <taxon>Danio</taxon>
    </lineage>
</organism>
<reference key="1">
    <citation type="submission" date="2006-10" db="EMBL/GenBank/DDBJ databases">
        <authorList>
            <consortium name="NIH - Zebrafish Gene Collection (ZGC) project"/>
        </authorList>
    </citation>
    <scope>NUCLEOTIDE SEQUENCE [LARGE SCALE MRNA]</scope>
</reference>
<dbReference type="EC" id="3.1.3.-"/>
<dbReference type="EMBL" id="BC124794">
    <property type="protein sequence ID" value="AAI24795.1"/>
    <property type="molecule type" value="mRNA"/>
</dbReference>
<dbReference type="RefSeq" id="NP_001071012.1">
    <property type="nucleotide sequence ID" value="NM_001077544.1"/>
</dbReference>
<dbReference type="SMR" id="Q08BB5"/>
<dbReference type="BioGRID" id="284407">
    <property type="interactions" value="1"/>
</dbReference>
<dbReference type="FunCoup" id="Q08BB5">
    <property type="interactions" value="579"/>
</dbReference>
<dbReference type="STRING" id="7955.ENSDARP00000082411"/>
<dbReference type="PaxDb" id="7955-ENSDARP00000082411"/>
<dbReference type="Ensembl" id="ENSDART00000087978">
    <property type="protein sequence ID" value="ENSDARP00000082411"/>
    <property type="gene ID" value="ENSDARG00000061587"/>
</dbReference>
<dbReference type="GeneID" id="558181"/>
<dbReference type="KEGG" id="dre:558181"/>
<dbReference type="AGR" id="ZFIN:ZDB-GENE-061013-647"/>
<dbReference type="CTD" id="558181"/>
<dbReference type="ZFIN" id="ZDB-GENE-061013-647">
    <property type="gene designation" value="ctdspl2a"/>
</dbReference>
<dbReference type="eggNOG" id="KOG1605">
    <property type="taxonomic scope" value="Eukaryota"/>
</dbReference>
<dbReference type="HOGENOM" id="CLU_034042_4_0_1"/>
<dbReference type="InParanoid" id="Q08BB5"/>
<dbReference type="OMA" id="NSNYPDA"/>
<dbReference type="OrthoDB" id="277011at2759"/>
<dbReference type="PhylomeDB" id="Q08BB5"/>
<dbReference type="TreeFam" id="TF354278"/>
<dbReference type="PRO" id="PR:Q08BB5"/>
<dbReference type="Proteomes" id="UP000000437">
    <property type="component" value="Chromosome 25"/>
</dbReference>
<dbReference type="Bgee" id="ENSDARG00000061587">
    <property type="expression patterns" value="Expressed in early embryo and 26 other cell types or tissues"/>
</dbReference>
<dbReference type="ExpressionAtlas" id="Q08BB5">
    <property type="expression patterns" value="baseline"/>
</dbReference>
<dbReference type="GO" id="GO:0004721">
    <property type="term" value="F:phosphoprotein phosphatase activity"/>
    <property type="evidence" value="ECO:0000318"/>
    <property type="project" value="GO_Central"/>
</dbReference>
<dbReference type="CDD" id="cd07521">
    <property type="entry name" value="HAD_FCP1-like"/>
    <property type="match status" value="1"/>
</dbReference>
<dbReference type="FunFam" id="3.40.50.1000:FF:000015">
    <property type="entry name" value="CTD small phosphatase-like protein 2"/>
    <property type="match status" value="1"/>
</dbReference>
<dbReference type="Gene3D" id="3.40.50.1000">
    <property type="entry name" value="HAD superfamily/HAD-like"/>
    <property type="match status" value="1"/>
</dbReference>
<dbReference type="InterPro" id="IPR011948">
    <property type="entry name" value="Dullard_phosphatase"/>
</dbReference>
<dbReference type="InterPro" id="IPR004274">
    <property type="entry name" value="FCP1_dom"/>
</dbReference>
<dbReference type="InterPro" id="IPR036412">
    <property type="entry name" value="HAD-like_sf"/>
</dbReference>
<dbReference type="InterPro" id="IPR023214">
    <property type="entry name" value="HAD_sf"/>
</dbReference>
<dbReference type="InterPro" id="IPR050365">
    <property type="entry name" value="TIM50"/>
</dbReference>
<dbReference type="NCBIfam" id="TIGR02251">
    <property type="entry name" value="HIF-SF_euk"/>
    <property type="match status" value="1"/>
</dbReference>
<dbReference type="PANTHER" id="PTHR12210">
    <property type="entry name" value="DULLARD PROTEIN PHOSPHATASE"/>
    <property type="match status" value="1"/>
</dbReference>
<dbReference type="Pfam" id="PF03031">
    <property type="entry name" value="NIF"/>
    <property type="match status" value="1"/>
</dbReference>
<dbReference type="SMART" id="SM00577">
    <property type="entry name" value="CPDc"/>
    <property type="match status" value="1"/>
</dbReference>
<dbReference type="SUPFAM" id="SSF56784">
    <property type="entry name" value="HAD-like"/>
    <property type="match status" value="1"/>
</dbReference>
<dbReference type="PROSITE" id="PS50969">
    <property type="entry name" value="FCP1"/>
    <property type="match status" value="1"/>
</dbReference>
<accession>Q08BB5</accession>
<evidence type="ECO:0000250" key="1"/>
<evidence type="ECO:0000255" key="2">
    <source>
        <dbReference type="PROSITE-ProRule" id="PRU00336"/>
    </source>
</evidence>
<evidence type="ECO:0000256" key="3">
    <source>
        <dbReference type="SAM" id="MobiDB-lite"/>
    </source>
</evidence>
<evidence type="ECO:0000305" key="4"/>